<feature type="chain" id="PRO_0000172180" description="Putative pre-16S rRNA nuclease">
    <location>
        <begin position="1"/>
        <end position="155"/>
    </location>
</feature>
<reference key="1">
    <citation type="journal article" date="2003" name="J. Bacteriol.">
        <title>Comparative analyses of the complete genome sequences of Pierce's disease and citrus variegated chlorosis strains of Xylella fastidiosa.</title>
        <authorList>
            <person name="Van Sluys M.A."/>
            <person name="de Oliveira M.C."/>
            <person name="Monteiro-Vitorello C.B."/>
            <person name="Miyaki C.Y."/>
            <person name="Furlan L.R."/>
            <person name="Camargo L.E.A."/>
            <person name="da Silva A.C.R."/>
            <person name="Moon D.H."/>
            <person name="Takita M.A."/>
            <person name="Lemos E.G.M."/>
            <person name="Machado M.A."/>
            <person name="Ferro M.I.T."/>
            <person name="da Silva F.R."/>
            <person name="Goldman M.H.S."/>
            <person name="Goldman G.H."/>
            <person name="Lemos M.V.F."/>
            <person name="El-Dorry H."/>
            <person name="Tsai S.M."/>
            <person name="Carrer H."/>
            <person name="Carraro D.M."/>
            <person name="de Oliveira R.C."/>
            <person name="Nunes L.R."/>
            <person name="Siqueira W.J."/>
            <person name="Coutinho L.L."/>
            <person name="Kimura E.T."/>
            <person name="Ferro E.S."/>
            <person name="Harakava R."/>
            <person name="Kuramae E.E."/>
            <person name="Marino C.L."/>
            <person name="Giglioti E."/>
            <person name="Abreu I.L."/>
            <person name="Alves L.M.C."/>
            <person name="do Amaral A.M."/>
            <person name="Baia G.S."/>
            <person name="Blanco S.R."/>
            <person name="Brito M.S."/>
            <person name="Cannavan F.S."/>
            <person name="Celestino A.V."/>
            <person name="da Cunha A.F."/>
            <person name="Fenille R.C."/>
            <person name="Ferro J.A."/>
            <person name="Formighieri E.F."/>
            <person name="Kishi L.T."/>
            <person name="Leoni S.G."/>
            <person name="Oliveira A.R."/>
            <person name="Rosa V.E. Jr."/>
            <person name="Sassaki F.T."/>
            <person name="Sena J.A.D."/>
            <person name="de Souza A.A."/>
            <person name="Truffi D."/>
            <person name="Tsukumo F."/>
            <person name="Yanai G.M."/>
            <person name="Zaros L.G."/>
            <person name="Civerolo E.L."/>
            <person name="Simpson A.J.G."/>
            <person name="Almeida N.F. Jr."/>
            <person name="Setubal J.C."/>
            <person name="Kitajima J.P."/>
        </authorList>
    </citation>
    <scope>NUCLEOTIDE SEQUENCE [LARGE SCALE GENOMIC DNA]</scope>
    <source>
        <strain>Temecula1 / ATCC 700964</strain>
    </source>
</reference>
<name>YQGF_XYLFT</name>
<accession>P67497</accession>
<accession>Q87C21</accession>
<accession>Q9PBB7</accession>
<evidence type="ECO:0000255" key="1">
    <source>
        <dbReference type="HAMAP-Rule" id="MF_00651"/>
    </source>
</evidence>
<protein>
    <recommendedName>
        <fullName evidence="1">Putative pre-16S rRNA nuclease</fullName>
        <ecNumber evidence="1">3.1.-.-</ecNumber>
    </recommendedName>
</protein>
<sequence>MPEASSPFPDGIVLGFDVGTRRIGVAVGSALGAGARAVAVIDVHGVAVDWNALDRVKRNWLPVGLVVGDPLTLEGHDQPIRKQAHAFACQLRERYRLPVVLVDERSSSVEAASRFAGARAAGYKRRRDADTLDAIAAAVILERWLADPMQATSLP</sequence>
<comment type="function">
    <text evidence="1">Could be a nuclease involved in processing of the 5'-end of pre-16S rRNA.</text>
</comment>
<comment type="subcellular location">
    <subcellularLocation>
        <location evidence="1">Cytoplasm</location>
    </subcellularLocation>
</comment>
<comment type="similarity">
    <text evidence="1">Belongs to the YqgF nuclease family.</text>
</comment>
<keyword id="KW-0963">Cytoplasm</keyword>
<keyword id="KW-0378">Hydrolase</keyword>
<keyword id="KW-0540">Nuclease</keyword>
<keyword id="KW-1185">Reference proteome</keyword>
<keyword id="KW-0690">Ribosome biogenesis</keyword>
<gene>
    <name type="ordered locus">PD_1275</name>
</gene>
<dbReference type="EC" id="3.1.-.-" evidence="1"/>
<dbReference type="EMBL" id="AE009442">
    <property type="protein sequence ID" value="AAO29124.1"/>
    <property type="molecule type" value="Genomic_DNA"/>
</dbReference>
<dbReference type="SMR" id="P67497"/>
<dbReference type="KEGG" id="xft:PD_1275"/>
<dbReference type="HOGENOM" id="CLU_098240_3_2_6"/>
<dbReference type="Proteomes" id="UP000002516">
    <property type="component" value="Chromosome"/>
</dbReference>
<dbReference type="GO" id="GO:0005829">
    <property type="term" value="C:cytosol"/>
    <property type="evidence" value="ECO:0007669"/>
    <property type="project" value="TreeGrafter"/>
</dbReference>
<dbReference type="GO" id="GO:0004518">
    <property type="term" value="F:nuclease activity"/>
    <property type="evidence" value="ECO:0007669"/>
    <property type="project" value="UniProtKB-KW"/>
</dbReference>
<dbReference type="GO" id="GO:0000967">
    <property type="term" value="P:rRNA 5'-end processing"/>
    <property type="evidence" value="ECO:0007669"/>
    <property type="project" value="UniProtKB-UniRule"/>
</dbReference>
<dbReference type="CDD" id="cd16964">
    <property type="entry name" value="YqgF"/>
    <property type="match status" value="1"/>
</dbReference>
<dbReference type="Gene3D" id="3.30.420.140">
    <property type="entry name" value="YqgF/RNase H-like domain"/>
    <property type="match status" value="1"/>
</dbReference>
<dbReference type="HAMAP" id="MF_00651">
    <property type="entry name" value="Nuclease_YqgF"/>
    <property type="match status" value="1"/>
</dbReference>
<dbReference type="InterPro" id="IPR012337">
    <property type="entry name" value="RNaseH-like_sf"/>
</dbReference>
<dbReference type="InterPro" id="IPR005227">
    <property type="entry name" value="YqgF"/>
</dbReference>
<dbReference type="InterPro" id="IPR006641">
    <property type="entry name" value="YqgF/RNaseH-like_dom"/>
</dbReference>
<dbReference type="InterPro" id="IPR037027">
    <property type="entry name" value="YqgF/RNaseH-like_dom_sf"/>
</dbReference>
<dbReference type="NCBIfam" id="TIGR00250">
    <property type="entry name" value="RNAse_H_YqgF"/>
    <property type="match status" value="1"/>
</dbReference>
<dbReference type="PANTHER" id="PTHR33317">
    <property type="entry name" value="POLYNUCLEOTIDYL TRANSFERASE, RIBONUCLEASE H-LIKE SUPERFAMILY PROTEIN"/>
    <property type="match status" value="1"/>
</dbReference>
<dbReference type="PANTHER" id="PTHR33317:SF4">
    <property type="entry name" value="POLYNUCLEOTIDYL TRANSFERASE, RIBONUCLEASE H-LIKE SUPERFAMILY PROTEIN"/>
    <property type="match status" value="1"/>
</dbReference>
<dbReference type="Pfam" id="PF03652">
    <property type="entry name" value="RuvX"/>
    <property type="match status" value="1"/>
</dbReference>
<dbReference type="SMART" id="SM00732">
    <property type="entry name" value="YqgFc"/>
    <property type="match status" value="1"/>
</dbReference>
<dbReference type="SUPFAM" id="SSF53098">
    <property type="entry name" value="Ribonuclease H-like"/>
    <property type="match status" value="1"/>
</dbReference>
<proteinExistence type="inferred from homology"/>
<organism>
    <name type="scientific">Xylella fastidiosa (strain Temecula1 / ATCC 700964)</name>
    <dbReference type="NCBI Taxonomy" id="183190"/>
    <lineage>
        <taxon>Bacteria</taxon>
        <taxon>Pseudomonadati</taxon>
        <taxon>Pseudomonadota</taxon>
        <taxon>Gammaproteobacteria</taxon>
        <taxon>Lysobacterales</taxon>
        <taxon>Lysobacteraceae</taxon>
        <taxon>Xylella</taxon>
    </lineage>
</organism>